<reference key="1">
    <citation type="journal article" date="2009" name="Proc. Natl. Acad. Sci. U.S.A.">
        <title>Biogeography of the Sulfolobus islandicus pan-genome.</title>
        <authorList>
            <person name="Reno M.L."/>
            <person name="Held N.L."/>
            <person name="Fields C.J."/>
            <person name="Burke P.V."/>
            <person name="Whitaker R.J."/>
        </authorList>
    </citation>
    <scope>NUCLEOTIDE SEQUENCE [LARGE SCALE GENOMIC DNA]</scope>
    <source>
        <strain>M.16.27</strain>
    </source>
</reference>
<comment type="similarity">
    <text evidence="1">Belongs to the eukaryotic ribosomal protein eS6 family.</text>
</comment>
<dbReference type="EMBL" id="CP001401">
    <property type="protein sequence ID" value="ACP55684.1"/>
    <property type="molecule type" value="Genomic_DNA"/>
</dbReference>
<dbReference type="RefSeq" id="WP_012711673.1">
    <property type="nucleotide sequence ID" value="NC_012632.1"/>
</dbReference>
<dbReference type="SMR" id="C3MZ52"/>
<dbReference type="KEGG" id="sim:M1627_1809"/>
<dbReference type="HOGENOM" id="CLU_1275302_0_0_2"/>
<dbReference type="Proteomes" id="UP000002307">
    <property type="component" value="Chromosome"/>
</dbReference>
<dbReference type="GO" id="GO:1990904">
    <property type="term" value="C:ribonucleoprotein complex"/>
    <property type="evidence" value="ECO:0007669"/>
    <property type="project" value="UniProtKB-KW"/>
</dbReference>
<dbReference type="GO" id="GO:0005840">
    <property type="term" value="C:ribosome"/>
    <property type="evidence" value="ECO:0007669"/>
    <property type="project" value="UniProtKB-KW"/>
</dbReference>
<dbReference type="GO" id="GO:0003735">
    <property type="term" value="F:structural constituent of ribosome"/>
    <property type="evidence" value="ECO:0007669"/>
    <property type="project" value="InterPro"/>
</dbReference>
<dbReference type="GO" id="GO:0006412">
    <property type="term" value="P:translation"/>
    <property type="evidence" value="ECO:0007669"/>
    <property type="project" value="UniProtKB-UniRule"/>
</dbReference>
<dbReference type="HAMAP" id="MF_00512">
    <property type="entry name" value="Ribosomal_eS6"/>
    <property type="match status" value="1"/>
</dbReference>
<dbReference type="InterPro" id="IPR001377">
    <property type="entry name" value="Ribosomal_eS6"/>
</dbReference>
<dbReference type="InterPro" id="IPR020924">
    <property type="entry name" value="Ribosomal_eS6_arc"/>
</dbReference>
<dbReference type="InterPro" id="IPR018282">
    <property type="entry name" value="Ribosomal_eS6_CS"/>
</dbReference>
<dbReference type="NCBIfam" id="NF003292">
    <property type="entry name" value="PRK04290.1-1"/>
    <property type="match status" value="1"/>
</dbReference>
<dbReference type="PANTHER" id="PTHR11502">
    <property type="entry name" value="40S RIBOSOMAL PROTEIN S6"/>
    <property type="match status" value="1"/>
</dbReference>
<dbReference type="Pfam" id="PF01092">
    <property type="entry name" value="Ribosomal_S6e"/>
    <property type="match status" value="1"/>
</dbReference>
<dbReference type="SMART" id="SM01405">
    <property type="entry name" value="Ribosomal_S6e"/>
    <property type="match status" value="1"/>
</dbReference>
<dbReference type="PROSITE" id="PS00578">
    <property type="entry name" value="RIBOSOMAL_S6E"/>
    <property type="match status" value="1"/>
</dbReference>
<organism>
    <name type="scientific">Saccharolobus islandicus (strain M.16.27)</name>
    <name type="common">Sulfolobus islandicus</name>
    <dbReference type="NCBI Taxonomy" id="427318"/>
    <lineage>
        <taxon>Archaea</taxon>
        <taxon>Thermoproteota</taxon>
        <taxon>Thermoprotei</taxon>
        <taxon>Sulfolobales</taxon>
        <taxon>Sulfolobaceae</taxon>
        <taxon>Saccharolobus</taxon>
    </lineage>
</organism>
<name>RS6E_SACI3</name>
<accession>C3MZ52</accession>
<sequence length="214" mass="23802">MPDFKIVISDPQSVEPKRIKVKVKANDQIKSIAGEKEGKAVPQAKVNEKTKQLLNIDTLITLEITKQEGDKKVKVKSHFKVEVDNNVPDNEVWISKTMAEKFGAEDFEAIAYRTKTLQISIDQDKATNLVGLKIGDTFEANQLIGLPVKLKITGGSDNSGFPMRFDVTGAAKRKILLSGPPGFYPNEDGERRRKTIRGNTISQEIVQINTIIVR</sequence>
<gene>
    <name evidence="1" type="primary">rps6e</name>
    <name type="ordered locus">M1627_1809</name>
</gene>
<keyword id="KW-0687">Ribonucleoprotein</keyword>
<keyword id="KW-0689">Ribosomal protein</keyword>
<evidence type="ECO:0000255" key="1">
    <source>
        <dbReference type="HAMAP-Rule" id="MF_00512"/>
    </source>
</evidence>
<evidence type="ECO:0000305" key="2"/>
<protein>
    <recommendedName>
        <fullName evidence="1">Small ribosomal subunit protein eS6</fullName>
    </recommendedName>
    <alternativeName>
        <fullName evidence="2">30S ribosomal protein S6e</fullName>
    </alternativeName>
</protein>
<feature type="chain" id="PRO_1000206622" description="Small ribosomal subunit protein eS6">
    <location>
        <begin position="1"/>
        <end position="214"/>
    </location>
</feature>
<proteinExistence type="inferred from homology"/>